<gene>
    <name evidence="1" type="primary">rpsC</name>
    <name type="ordered locus">plu4720</name>
</gene>
<organism>
    <name type="scientific">Photorhabdus laumondii subsp. laumondii (strain DSM 15139 / CIP 105565 / TT01)</name>
    <name type="common">Photorhabdus luminescens subsp. laumondii</name>
    <dbReference type="NCBI Taxonomy" id="243265"/>
    <lineage>
        <taxon>Bacteria</taxon>
        <taxon>Pseudomonadati</taxon>
        <taxon>Pseudomonadota</taxon>
        <taxon>Gammaproteobacteria</taxon>
        <taxon>Enterobacterales</taxon>
        <taxon>Morganellaceae</taxon>
        <taxon>Photorhabdus</taxon>
    </lineage>
</organism>
<sequence length="233" mass="26071">MGQKVHPNGIRLGIVKPWNSTWYANTKEFADNLDSDFKVRQYLKKELAKASISRIVIERPAKSIRVTIHTARPGIVIGKKGEDVEKLRKTVAEIAGVPAQINISEVRKPELDAKLVADSITSQLERRIMFRRAMKRAVQNAMRQGAKGIKVEVSGRLGGAEIARPEWYREGRVPLHTLRADIDYNTSEAHTTYGVLGVKVWIFKGEILGGMAAVEQAEKPAAQPKKQQRKGRK</sequence>
<keyword id="KW-1185">Reference proteome</keyword>
<keyword id="KW-0687">Ribonucleoprotein</keyword>
<keyword id="KW-0689">Ribosomal protein</keyword>
<keyword id="KW-0694">RNA-binding</keyword>
<keyword id="KW-0699">rRNA-binding</keyword>
<accession>Q7MYF7</accession>
<reference key="1">
    <citation type="journal article" date="2003" name="Nat. Biotechnol.">
        <title>The genome sequence of the entomopathogenic bacterium Photorhabdus luminescens.</title>
        <authorList>
            <person name="Duchaud E."/>
            <person name="Rusniok C."/>
            <person name="Frangeul L."/>
            <person name="Buchrieser C."/>
            <person name="Givaudan A."/>
            <person name="Taourit S."/>
            <person name="Bocs S."/>
            <person name="Boursaux-Eude C."/>
            <person name="Chandler M."/>
            <person name="Charles J.-F."/>
            <person name="Dassa E."/>
            <person name="Derose R."/>
            <person name="Derzelle S."/>
            <person name="Freyssinet G."/>
            <person name="Gaudriault S."/>
            <person name="Medigue C."/>
            <person name="Lanois A."/>
            <person name="Powell K."/>
            <person name="Siguier P."/>
            <person name="Vincent R."/>
            <person name="Wingate V."/>
            <person name="Zouine M."/>
            <person name="Glaser P."/>
            <person name="Boemare N."/>
            <person name="Danchin A."/>
            <person name="Kunst F."/>
        </authorList>
    </citation>
    <scope>NUCLEOTIDE SEQUENCE [LARGE SCALE GENOMIC DNA]</scope>
    <source>
        <strain>DSM 15139 / CIP 105565 / TT01</strain>
    </source>
</reference>
<feature type="chain" id="PRO_0000130168" description="Small ribosomal subunit protein uS3">
    <location>
        <begin position="1"/>
        <end position="233"/>
    </location>
</feature>
<feature type="domain" description="KH type-2" evidence="1">
    <location>
        <begin position="39"/>
        <end position="107"/>
    </location>
</feature>
<proteinExistence type="inferred from homology"/>
<evidence type="ECO:0000255" key="1">
    <source>
        <dbReference type="HAMAP-Rule" id="MF_01309"/>
    </source>
</evidence>
<evidence type="ECO:0000305" key="2"/>
<dbReference type="EMBL" id="BX571874">
    <property type="protein sequence ID" value="CAE17092.1"/>
    <property type="molecule type" value="Genomic_DNA"/>
</dbReference>
<dbReference type="RefSeq" id="WP_011148789.1">
    <property type="nucleotide sequence ID" value="NC_005126.1"/>
</dbReference>
<dbReference type="SMR" id="Q7MYF7"/>
<dbReference type="STRING" id="243265.plu4720"/>
<dbReference type="GeneID" id="48850945"/>
<dbReference type="KEGG" id="plu:plu4720"/>
<dbReference type="eggNOG" id="COG0092">
    <property type="taxonomic scope" value="Bacteria"/>
</dbReference>
<dbReference type="HOGENOM" id="CLU_058591_0_2_6"/>
<dbReference type="OrthoDB" id="9806396at2"/>
<dbReference type="Proteomes" id="UP000002514">
    <property type="component" value="Chromosome"/>
</dbReference>
<dbReference type="GO" id="GO:0022627">
    <property type="term" value="C:cytosolic small ribosomal subunit"/>
    <property type="evidence" value="ECO:0007669"/>
    <property type="project" value="TreeGrafter"/>
</dbReference>
<dbReference type="GO" id="GO:0003729">
    <property type="term" value="F:mRNA binding"/>
    <property type="evidence" value="ECO:0007669"/>
    <property type="project" value="UniProtKB-UniRule"/>
</dbReference>
<dbReference type="GO" id="GO:0019843">
    <property type="term" value="F:rRNA binding"/>
    <property type="evidence" value="ECO:0007669"/>
    <property type="project" value="UniProtKB-UniRule"/>
</dbReference>
<dbReference type="GO" id="GO:0003735">
    <property type="term" value="F:structural constituent of ribosome"/>
    <property type="evidence" value="ECO:0007669"/>
    <property type="project" value="InterPro"/>
</dbReference>
<dbReference type="GO" id="GO:0006412">
    <property type="term" value="P:translation"/>
    <property type="evidence" value="ECO:0007669"/>
    <property type="project" value="UniProtKB-UniRule"/>
</dbReference>
<dbReference type="CDD" id="cd02412">
    <property type="entry name" value="KH-II_30S_S3"/>
    <property type="match status" value="1"/>
</dbReference>
<dbReference type="FunFam" id="3.30.1140.32:FF:000001">
    <property type="entry name" value="30S ribosomal protein S3"/>
    <property type="match status" value="1"/>
</dbReference>
<dbReference type="FunFam" id="3.30.300.20:FF:000001">
    <property type="entry name" value="30S ribosomal protein S3"/>
    <property type="match status" value="1"/>
</dbReference>
<dbReference type="Gene3D" id="3.30.300.20">
    <property type="match status" value="1"/>
</dbReference>
<dbReference type="Gene3D" id="3.30.1140.32">
    <property type="entry name" value="Ribosomal protein S3, C-terminal domain"/>
    <property type="match status" value="1"/>
</dbReference>
<dbReference type="HAMAP" id="MF_01309_B">
    <property type="entry name" value="Ribosomal_uS3_B"/>
    <property type="match status" value="1"/>
</dbReference>
<dbReference type="InterPro" id="IPR004087">
    <property type="entry name" value="KH_dom"/>
</dbReference>
<dbReference type="InterPro" id="IPR015946">
    <property type="entry name" value="KH_dom-like_a/b"/>
</dbReference>
<dbReference type="InterPro" id="IPR004044">
    <property type="entry name" value="KH_dom_type_2"/>
</dbReference>
<dbReference type="InterPro" id="IPR009019">
    <property type="entry name" value="KH_sf_prok-type"/>
</dbReference>
<dbReference type="InterPro" id="IPR036419">
    <property type="entry name" value="Ribosomal_S3_C_sf"/>
</dbReference>
<dbReference type="InterPro" id="IPR005704">
    <property type="entry name" value="Ribosomal_uS3_bac-typ"/>
</dbReference>
<dbReference type="InterPro" id="IPR001351">
    <property type="entry name" value="Ribosomal_uS3_C"/>
</dbReference>
<dbReference type="InterPro" id="IPR018280">
    <property type="entry name" value="Ribosomal_uS3_CS"/>
</dbReference>
<dbReference type="NCBIfam" id="TIGR01009">
    <property type="entry name" value="rpsC_bact"/>
    <property type="match status" value="1"/>
</dbReference>
<dbReference type="PANTHER" id="PTHR11760">
    <property type="entry name" value="30S/40S RIBOSOMAL PROTEIN S3"/>
    <property type="match status" value="1"/>
</dbReference>
<dbReference type="PANTHER" id="PTHR11760:SF19">
    <property type="entry name" value="SMALL RIBOSOMAL SUBUNIT PROTEIN US3C"/>
    <property type="match status" value="1"/>
</dbReference>
<dbReference type="Pfam" id="PF07650">
    <property type="entry name" value="KH_2"/>
    <property type="match status" value="1"/>
</dbReference>
<dbReference type="Pfam" id="PF00189">
    <property type="entry name" value="Ribosomal_S3_C"/>
    <property type="match status" value="1"/>
</dbReference>
<dbReference type="SMART" id="SM00322">
    <property type="entry name" value="KH"/>
    <property type="match status" value="1"/>
</dbReference>
<dbReference type="SUPFAM" id="SSF54814">
    <property type="entry name" value="Prokaryotic type KH domain (KH-domain type II)"/>
    <property type="match status" value="1"/>
</dbReference>
<dbReference type="SUPFAM" id="SSF54821">
    <property type="entry name" value="Ribosomal protein S3 C-terminal domain"/>
    <property type="match status" value="1"/>
</dbReference>
<dbReference type="PROSITE" id="PS50823">
    <property type="entry name" value="KH_TYPE_2"/>
    <property type="match status" value="1"/>
</dbReference>
<dbReference type="PROSITE" id="PS00548">
    <property type="entry name" value="RIBOSOMAL_S3"/>
    <property type="match status" value="1"/>
</dbReference>
<name>RS3_PHOLL</name>
<protein>
    <recommendedName>
        <fullName evidence="1">Small ribosomal subunit protein uS3</fullName>
    </recommendedName>
    <alternativeName>
        <fullName evidence="2">30S ribosomal protein S3</fullName>
    </alternativeName>
</protein>
<comment type="function">
    <text evidence="1">Binds the lower part of the 30S subunit head. Binds mRNA in the 70S ribosome, positioning it for translation.</text>
</comment>
<comment type="subunit">
    <text evidence="1">Part of the 30S ribosomal subunit. Forms a tight complex with proteins S10 and S14.</text>
</comment>
<comment type="similarity">
    <text evidence="1">Belongs to the universal ribosomal protein uS3 family.</text>
</comment>